<gene>
    <name type="primary">galM</name>
</gene>
<dbReference type="EC" id="5.1.3.3"/>
<dbReference type="EMBL" id="M38175">
    <property type="protein sequence ID" value="AAA26945.1"/>
    <property type="molecule type" value="Genomic_DNA"/>
</dbReference>
<dbReference type="PIR" id="B44509">
    <property type="entry name" value="B44509"/>
</dbReference>
<dbReference type="RefSeq" id="WP_014608520.1">
    <property type="nucleotide sequence ID" value="NZ_VBTK01000009.1"/>
</dbReference>
<dbReference type="SMR" id="P21955"/>
<dbReference type="eggNOG" id="COG2017">
    <property type="taxonomic scope" value="Bacteria"/>
</dbReference>
<dbReference type="BioCyc" id="MetaCyc:MONOMER-6141"/>
<dbReference type="UniPathway" id="UPA00242"/>
<dbReference type="GO" id="GO:0005737">
    <property type="term" value="C:cytoplasm"/>
    <property type="evidence" value="ECO:0007669"/>
    <property type="project" value="TreeGrafter"/>
</dbReference>
<dbReference type="GO" id="GO:0004034">
    <property type="term" value="F:aldose 1-epimerase activity"/>
    <property type="evidence" value="ECO:0007669"/>
    <property type="project" value="UniProtKB-EC"/>
</dbReference>
<dbReference type="GO" id="GO:0030246">
    <property type="term" value="F:carbohydrate binding"/>
    <property type="evidence" value="ECO:0007669"/>
    <property type="project" value="InterPro"/>
</dbReference>
<dbReference type="GO" id="GO:0033499">
    <property type="term" value="P:galactose catabolic process via UDP-galactose, Leloir pathway"/>
    <property type="evidence" value="ECO:0007669"/>
    <property type="project" value="TreeGrafter"/>
</dbReference>
<dbReference type="GO" id="GO:0006006">
    <property type="term" value="P:glucose metabolic process"/>
    <property type="evidence" value="ECO:0007669"/>
    <property type="project" value="TreeGrafter"/>
</dbReference>
<dbReference type="CDD" id="cd09019">
    <property type="entry name" value="galactose_mutarotase_like"/>
    <property type="match status" value="1"/>
</dbReference>
<dbReference type="Gene3D" id="2.70.98.10">
    <property type="match status" value="1"/>
</dbReference>
<dbReference type="InterPro" id="IPR018052">
    <property type="entry name" value="Ald1_epimerase_CS"/>
</dbReference>
<dbReference type="InterPro" id="IPR013458">
    <property type="entry name" value="Ald_epimerase_bac"/>
</dbReference>
<dbReference type="InterPro" id="IPR015443">
    <property type="entry name" value="Aldose_1-epimerase"/>
</dbReference>
<dbReference type="InterPro" id="IPR008183">
    <property type="entry name" value="Aldose_1/G6P_1-epimerase"/>
</dbReference>
<dbReference type="InterPro" id="IPR011013">
    <property type="entry name" value="Gal_mutarotase_sf_dom"/>
</dbReference>
<dbReference type="InterPro" id="IPR047215">
    <property type="entry name" value="Galactose_mutarotase-like"/>
</dbReference>
<dbReference type="InterPro" id="IPR014718">
    <property type="entry name" value="GH-type_carb-bd"/>
</dbReference>
<dbReference type="NCBIfam" id="TIGR02636">
    <property type="entry name" value="galM_Leloir"/>
    <property type="match status" value="1"/>
</dbReference>
<dbReference type="PANTHER" id="PTHR10091">
    <property type="entry name" value="ALDOSE-1-EPIMERASE"/>
    <property type="match status" value="1"/>
</dbReference>
<dbReference type="PANTHER" id="PTHR10091:SF0">
    <property type="entry name" value="GALACTOSE MUTAROTASE"/>
    <property type="match status" value="1"/>
</dbReference>
<dbReference type="Pfam" id="PF01263">
    <property type="entry name" value="Aldose_epim"/>
    <property type="match status" value="1"/>
</dbReference>
<dbReference type="PIRSF" id="PIRSF005096">
    <property type="entry name" value="GALM"/>
    <property type="match status" value="1"/>
</dbReference>
<dbReference type="SUPFAM" id="SSF74650">
    <property type="entry name" value="Galactose mutarotase-like"/>
    <property type="match status" value="1"/>
</dbReference>
<dbReference type="PROSITE" id="PS00545">
    <property type="entry name" value="ALDOSE_1_EPIMERASE"/>
    <property type="match status" value="1"/>
</dbReference>
<name>GALM_STRTR</name>
<proteinExistence type="inferred from homology"/>
<accession>P21955</accession>
<comment type="function">
    <text evidence="1">Mutarotase converts alpha-aldose to the beta-anomer. It is active on D-glucose, L-arabinose, D-xylose, D-galactose, maltose and lactose (By similarity).</text>
</comment>
<comment type="catalytic activity">
    <reaction evidence="2">
        <text>alpha-D-glucose = beta-D-glucose</text>
        <dbReference type="Rhea" id="RHEA:10264"/>
        <dbReference type="ChEBI" id="CHEBI:15903"/>
        <dbReference type="ChEBI" id="CHEBI:17925"/>
        <dbReference type="EC" id="5.1.3.3"/>
    </reaction>
</comment>
<comment type="pathway">
    <text>Carbohydrate metabolism; hexose metabolism.</text>
</comment>
<comment type="similarity">
    <text evidence="3">Belongs to the aldose epimerase family.</text>
</comment>
<organism>
    <name type="scientific">Streptococcus thermophilus</name>
    <dbReference type="NCBI Taxonomy" id="1308"/>
    <lineage>
        <taxon>Bacteria</taxon>
        <taxon>Bacillati</taxon>
        <taxon>Bacillota</taxon>
        <taxon>Bacilli</taxon>
        <taxon>Lactobacillales</taxon>
        <taxon>Streptococcaceae</taxon>
        <taxon>Streptococcus</taxon>
    </lineage>
</organism>
<evidence type="ECO:0000250" key="1"/>
<evidence type="ECO:0000255" key="2">
    <source>
        <dbReference type="PROSITE-ProRule" id="PRU10126"/>
    </source>
</evidence>
<evidence type="ECO:0000305" key="3"/>
<keyword id="KW-0119">Carbohydrate metabolism</keyword>
<keyword id="KW-0413">Isomerase</keyword>
<sequence>MKISCEIIGKVDSGDVSKISMENNNGVVISTLTTGATLQEFLVPMETGALKNIVLGFSDFEDYYKNNLCACQSIGRVAGRIGKASYTHNMVLYSLPKNEGDNCLHGGPKGMQVQNWNYVTNLNDDYVETKFIRRLYSSVDGFPGDVTVSISYRLNNNNRLTILFEAFDVTESTVFNPTNHVYFNLSDKQDLSSHELQIYSDYRLELDSELIPTGQKINVDETNYDFRKTTDLLPRIEANNGFDDAFVVGGGTCDHVKEVAILHDKESGDGIEIFSNRNGLVIFTMDDIEDNIYFARDKGKMAKRREAIAMEAQTLPDAVNHKGFGDIILDKGHSVNYEIGFQYFNSSR</sequence>
<reference key="1">
    <citation type="journal article" date="1990" name="J. Bacteriol.">
        <title>Carbohydrate utilization in Streptococcus thermophilus: characterization of the genes for aldose 1-epimerase (mutarotase) and UDPglucose 4-epimerase.</title>
        <authorList>
            <person name="Poolman B."/>
            <person name="Royer T.J."/>
            <person name="Mainzer S.E."/>
            <person name="Schmidt B.F."/>
        </authorList>
    </citation>
    <scope>NUCLEOTIDE SEQUENCE [GENOMIC DNA]</scope>
    <source>
        <strain>A147</strain>
    </source>
</reference>
<protein>
    <recommendedName>
        <fullName>Aldose 1-epimerase</fullName>
        <ecNumber>5.1.3.3</ecNumber>
    </recommendedName>
    <alternativeName>
        <fullName>Galactose mutarotase</fullName>
    </alternativeName>
    <alternativeName>
        <fullName>Type-1 mutarotase</fullName>
    </alternativeName>
</protein>
<feature type="chain" id="PRO_0000197447" description="Aldose 1-epimerase">
    <location>
        <begin position="1"/>
        <end position="348"/>
    </location>
</feature>
<feature type="active site" description="Proton donor" evidence="2">
    <location>
        <position position="180"/>
    </location>
</feature>
<feature type="active site" description="Proton acceptor" evidence="1">
    <location>
        <position position="311"/>
    </location>
</feature>
<feature type="binding site" evidence="1">
    <location>
        <position position="80"/>
    </location>
    <ligand>
        <name>substrate</name>
    </ligand>
</feature>
<feature type="binding site" evidence="1">
    <location>
        <position position="243"/>
    </location>
    <ligand>
        <name>substrate</name>
    </ligand>
</feature>